<organism>
    <name type="scientific">Bacillus subtilis (strain 168)</name>
    <dbReference type="NCBI Taxonomy" id="224308"/>
    <lineage>
        <taxon>Bacteria</taxon>
        <taxon>Bacillati</taxon>
        <taxon>Bacillota</taxon>
        <taxon>Bacilli</taxon>
        <taxon>Bacillales</taxon>
        <taxon>Bacillaceae</taxon>
        <taxon>Bacillus</taxon>
    </lineage>
</organism>
<comment type="function">
    <text>Produces ATP from ADP in the presence of a proton gradient across the membrane. The alpha chain is a regulatory subunit.</text>
</comment>
<comment type="catalytic activity">
    <reaction evidence="1">
        <text>ATP + H2O + 4 H(+)(in) = ADP + phosphate + 5 H(+)(out)</text>
        <dbReference type="Rhea" id="RHEA:57720"/>
        <dbReference type="ChEBI" id="CHEBI:15377"/>
        <dbReference type="ChEBI" id="CHEBI:15378"/>
        <dbReference type="ChEBI" id="CHEBI:30616"/>
        <dbReference type="ChEBI" id="CHEBI:43474"/>
        <dbReference type="ChEBI" id="CHEBI:456216"/>
        <dbReference type="EC" id="7.1.2.2"/>
    </reaction>
</comment>
<comment type="subunit">
    <text evidence="1 2 5">F-type ATPases have 2 components, CF(1) - the catalytic core - and CF(0) - the membrane proton channel. CF(1) has five subunits: alpha(3), beta(3), gamma(1), delta(1), epsilon(1). CF(0) has three main subunits: a(1), b(2) and c(9-12). The alpha and beta chains form an alternating ring which encloses part of the gamma chain. CF(1) is attached to CF(0) by a central stalk formed by the gamma and epsilon chains, while a peripheral stalk is formed by the delta and b chains (Probable). The F(1)F(0) complex interacts with SpoIIIJ and YqjG; YqgA is found in the same complex.</text>
</comment>
<comment type="subcellular location">
    <subcellularLocation>
        <location evidence="1 3">Cell membrane</location>
        <topology evidence="1">Peripheral membrane protein</topology>
    </subcellularLocation>
    <subcellularLocation>
        <location evidence="3">Membrane raft</location>
        <topology evidence="5">Peripheral membrane protein</topology>
    </subcellularLocation>
    <text evidence="3">Present in detergent-resistant membrane (DRM) fractions that may be equivalent to eukaryotic membrane rafts; these rafts include proteins involved in signaling, molecule trafficking and protein secretion.</text>
</comment>
<comment type="similarity">
    <text evidence="1">Belongs to the ATPase alpha/beta chains family.</text>
</comment>
<accession>P37808</accession>
<name>ATPA_BACSU</name>
<keyword id="KW-0066">ATP synthesis</keyword>
<keyword id="KW-0067">ATP-binding</keyword>
<keyword id="KW-1003">Cell membrane</keyword>
<keyword id="KW-0139">CF(1)</keyword>
<keyword id="KW-0903">Direct protein sequencing</keyword>
<keyword id="KW-0375">Hydrogen ion transport</keyword>
<keyword id="KW-0406">Ion transport</keyword>
<keyword id="KW-0472">Membrane</keyword>
<keyword id="KW-0547">Nucleotide-binding</keyword>
<keyword id="KW-1185">Reference proteome</keyword>
<keyword id="KW-1278">Translocase</keyword>
<keyword id="KW-0813">Transport</keyword>
<dbReference type="EC" id="7.1.2.2" evidence="1"/>
<dbReference type="EMBL" id="Z28592">
    <property type="protein sequence ID" value="CAA82258.1"/>
    <property type="molecule type" value="Genomic_DNA"/>
</dbReference>
<dbReference type="EMBL" id="AL009126">
    <property type="protein sequence ID" value="CAB15700.1"/>
    <property type="molecule type" value="Genomic_DNA"/>
</dbReference>
<dbReference type="PIR" id="I40366">
    <property type="entry name" value="I40366"/>
</dbReference>
<dbReference type="RefSeq" id="NP_391564.1">
    <property type="nucleotide sequence ID" value="NC_000964.3"/>
</dbReference>
<dbReference type="RefSeq" id="WP_003243657.1">
    <property type="nucleotide sequence ID" value="NZ_OZ025638.1"/>
</dbReference>
<dbReference type="SMR" id="P37808"/>
<dbReference type="FunCoup" id="P37808">
    <property type="interactions" value="650"/>
</dbReference>
<dbReference type="IntAct" id="P37808">
    <property type="interactions" value="3"/>
</dbReference>
<dbReference type="MINT" id="P37808"/>
<dbReference type="STRING" id="224308.BSU36830"/>
<dbReference type="jPOST" id="P37808"/>
<dbReference type="PaxDb" id="224308-BSU36830"/>
<dbReference type="EnsemblBacteria" id="CAB15700">
    <property type="protein sequence ID" value="CAB15700"/>
    <property type="gene ID" value="BSU_36830"/>
</dbReference>
<dbReference type="GeneID" id="936995"/>
<dbReference type="KEGG" id="bsu:BSU36830"/>
<dbReference type="PATRIC" id="fig|224308.179.peg.3989"/>
<dbReference type="eggNOG" id="COG0056">
    <property type="taxonomic scope" value="Bacteria"/>
</dbReference>
<dbReference type="InParanoid" id="P37808"/>
<dbReference type="OrthoDB" id="9803053at2"/>
<dbReference type="PhylomeDB" id="P37808"/>
<dbReference type="BioCyc" id="BSUB:BSU36830-MONOMER"/>
<dbReference type="SABIO-RK" id="P37808"/>
<dbReference type="Proteomes" id="UP000001570">
    <property type="component" value="Chromosome"/>
</dbReference>
<dbReference type="GO" id="GO:0045121">
    <property type="term" value="C:membrane raft"/>
    <property type="evidence" value="ECO:0007669"/>
    <property type="project" value="UniProtKB-SubCell"/>
</dbReference>
<dbReference type="GO" id="GO:0005886">
    <property type="term" value="C:plasma membrane"/>
    <property type="evidence" value="ECO:0007669"/>
    <property type="project" value="UniProtKB-SubCell"/>
</dbReference>
<dbReference type="GO" id="GO:0045259">
    <property type="term" value="C:proton-transporting ATP synthase complex"/>
    <property type="evidence" value="ECO:0007669"/>
    <property type="project" value="UniProtKB-KW"/>
</dbReference>
<dbReference type="GO" id="GO:0043531">
    <property type="term" value="F:ADP binding"/>
    <property type="evidence" value="ECO:0000318"/>
    <property type="project" value="GO_Central"/>
</dbReference>
<dbReference type="GO" id="GO:0005524">
    <property type="term" value="F:ATP binding"/>
    <property type="evidence" value="ECO:0000318"/>
    <property type="project" value="GO_Central"/>
</dbReference>
<dbReference type="GO" id="GO:0046933">
    <property type="term" value="F:proton-transporting ATP synthase activity, rotational mechanism"/>
    <property type="evidence" value="ECO:0007669"/>
    <property type="project" value="UniProtKB-UniRule"/>
</dbReference>
<dbReference type="GO" id="GO:0015986">
    <property type="term" value="P:proton motive force-driven ATP synthesis"/>
    <property type="evidence" value="ECO:0000318"/>
    <property type="project" value="GO_Central"/>
</dbReference>
<dbReference type="CDD" id="cd18113">
    <property type="entry name" value="ATP-synt_F1_alpha_C"/>
    <property type="match status" value="1"/>
</dbReference>
<dbReference type="CDD" id="cd18116">
    <property type="entry name" value="ATP-synt_F1_alpha_N"/>
    <property type="match status" value="1"/>
</dbReference>
<dbReference type="CDD" id="cd01132">
    <property type="entry name" value="F1-ATPase_alpha_CD"/>
    <property type="match status" value="1"/>
</dbReference>
<dbReference type="FunFam" id="1.20.150.20:FF:000001">
    <property type="entry name" value="ATP synthase subunit alpha"/>
    <property type="match status" value="1"/>
</dbReference>
<dbReference type="FunFam" id="2.40.30.20:FF:000001">
    <property type="entry name" value="ATP synthase subunit alpha"/>
    <property type="match status" value="1"/>
</dbReference>
<dbReference type="FunFam" id="3.40.50.300:FF:000002">
    <property type="entry name" value="ATP synthase subunit alpha"/>
    <property type="match status" value="1"/>
</dbReference>
<dbReference type="Gene3D" id="2.40.30.20">
    <property type="match status" value="1"/>
</dbReference>
<dbReference type="Gene3D" id="1.20.150.20">
    <property type="entry name" value="ATP synthase alpha/beta chain, C-terminal domain"/>
    <property type="match status" value="1"/>
</dbReference>
<dbReference type="Gene3D" id="3.40.50.300">
    <property type="entry name" value="P-loop containing nucleotide triphosphate hydrolases"/>
    <property type="match status" value="1"/>
</dbReference>
<dbReference type="HAMAP" id="MF_01346">
    <property type="entry name" value="ATP_synth_alpha_bact"/>
    <property type="match status" value="1"/>
</dbReference>
<dbReference type="InterPro" id="IPR023366">
    <property type="entry name" value="ATP_synth_asu-like_sf"/>
</dbReference>
<dbReference type="InterPro" id="IPR000793">
    <property type="entry name" value="ATP_synth_asu_C"/>
</dbReference>
<dbReference type="InterPro" id="IPR038376">
    <property type="entry name" value="ATP_synth_asu_C_sf"/>
</dbReference>
<dbReference type="InterPro" id="IPR033732">
    <property type="entry name" value="ATP_synth_F1_a_nt-bd_dom"/>
</dbReference>
<dbReference type="InterPro" id="IPR005294">
    <property type="entry name" value="ATP_synth_F1_asu"/>
</dbReference>
<dbReference type="InterPro" id="IPR020003">
    <property type="entry name" value="ATPase_a/bsu_AS"/>
</dbReference>
<dbReference type="InterPro" id="IPR004100">
    <property type="entry name" value="ATPase_F1/V1/A1_a/bsu_N"/>
</dbReference>
<dbReference type="InterPro" id="IPR036121">
    <property type="entry name" value="ATPase_F1/V1/A1_a/bsu_N_sf"/>
</dbReference>
<dbReference type="InterPro" id="IPR000194">
    <property type="entry name" value="ATPase_F1/V1/A1_a/bsu_nucl-bd"/>
</dbReference>
<dbReference type="InterPro" id="IPR027417">
    <property type="entry name" value="P-loop_NTPase"/>
</dbReference>
<dbReference type="NCBIfam" id="TIGR00962">
    <property type="entry name" value="atpA"/>
    <property type="match status" value="1"/>
</dbReference>
<dbReference type="NCBIfam" id="NF009884">
    <property type="entry name" value="PRK13343.1"/>
    <property type="match status" value="1"/>
</dbReference>
<dbReference type="PANTHER" id="PTHR48082">
    <property type="entry name" value="ATP SYNTHASE SUBUNIT ALPHA, MITOCHONDRIAL"/>
    <property type="match status" value="1"/>
</dbReference>
<dbReference type="PANTHER" id="PTHR48082:SF2">
    <property type="entry name" value="ATP SYNTHASE SUBUNIT ALPHA, MITOCHONDRIAL"/>
    <property type="match status" value="1"/>
</dbReference>
<dbReference type="Pfam" id="PF00006">
    <property type="entry name" value="ATP-synt_ab"/>
    <property type="match status" value="1"/>
</dbReference>
<dbReference type="Pfam" id="PF00306">
    <property type="entry name" value="ATP-synt_ab_C"/>
    <property type="match status" value="1"/>
</dbReference>
<dbReference type="Pfam" id="PF02874">
    <property type="entry name" value="ATP-synt_ab_N"/>
    <property type="match status" value="1"/>
</dbReference>
<dbReference type="PIRSF" id="PIRSF039088">
    <property type="entry name" value="F_ATPase_subunit_alpha"/>
    <property type="match status" value="1"/>
</dbReference>
<dbReference type="SUPFAM" id="SSF47917">
    <property type="entry name" value="C-terminal domain of alpha and beta subunits of F1 ATP synthase"/>
    <property type="match status" value="1"/>
</dbReference>
<dbReference type="SUPFAM" id="SSF50615">
    <property type="entry name" value="N-terminal domain of alpha and beta subunits of F1 ATP synthase"/>
    <property type="match status" value="1"/>
</dbReference>
<dbReference type="SUPFAM" id="SSF52540">
    <property type="entry name" value="P-loop containing nucleoside triphosphate hydrolases"/>
    <property type="match status" value="1"/>
</dbReference>
<dbReference type="PROSITE" id="PS00152">
    <property type="entry name" value="ATPASE_ALPHA_BETA"/>
    <property type="match status" value="1"/>
</dbReference>
<reference key="1">
    <citation type="journal article" date="1994" name="J. Bacteriol.">
        <title>Bacillus subtilis F0F1 ATPase: DNA sequence of the atp operon and characterization of atp mutants.</title>
        <authorList>
            <person name="Santana M."/>
            <person name="Ionescu M.S."/>
            <person name="Vertes A."/>
            <person name="Longin R."/>
            <person name="Kunst F."/>
            <person name="Danchin A."/>
            <person name="Glaser P."/>
        </authorList>
    </citation>
    <scope>NUCLEOTIDE SEQUENCE [GENOMIC DNA]</scope>
    <source>
        <strain>168</strain>
    </source>
</reference>
<reference key="2">
    <citation type="journal article" date="1997" name="Nature">
        <title>The complete genome sequence of the Gram-positive bacterium Bacillus subtilis.</title>
        <authorList>
            <person name="Kunst F."/>
            <person name="Ogasawara N."/>
            <person name="Moszer I."/>
            <person name="Albertini A.M."/>
            <person name="Alloni G."/>
            <person name="Azevedo V."/>
            <person name="Bertero M.G."/>
            <person name="Bessieres P."/>
            <person name="Bolotin A."/>
            <person name="Borchert S."/>
            <person name="Borriss R."/>
            <person name="Boursier L."/>
            <person name="Brans A."/>
            <person name="Braun M."/>
            <person name="Brignell S.C."/>
            <person name="Bron S."/>
            <person name="Brouillet S."/>
            <person name="Bruschi C.V."/>
            <person name="Caldwell B."/>
            <person name="Capuano V."/>
            <person name="Carter N.M."/>
            <person name="Choi S.-K."/>
            <person name="Codani J.-J."/>
            <person name="Connerton I.F."/>
            <person name="Cummings N.J."/>
            <person name="Daniel R.A."/>
            <person name="Denizot F."/>
            <person name="Devine K.M."/>
            <person name="Duesterhoeft A."/>
            <person name="Ehrlich S.D."/>
            <person name="Emmerson P.T."/>
            <person name="Entian K.-D."/>
            <person name="Errington J."/>
            <person name="Fabret C."/>
            <person name="Ferrari E."/>
            <person name="Foulger D."/>
            <person name="Fritz C."/>
            <person name="Fujita M."/>
            <person name="Fujita Y."/>
            <person name="Fuma S."/>
            <person name="Galizzi A."/>
            <person name="Galleron N."/>
            <person name="Ghim S.-Y."/>
            <person name="Glaser P."/>
            <person name="Goffeau A."/>
            <person name="Golightly E.J."/>
            <person name="Grandi G."/>
            <person name="Guiseppi G."/>
            <person name="Guy B.J."/>
            <person name="Haga K."/>
            <person name="Haiech J."/>
            <person name="Harwood C.R."/>
            <person name="Henaut A."/>
            <person name="Hilbert H."/>
            <person name="Holsappel S."/>
            <person name="Hosono S."/>
            <person name="Hullo M.-F."/>
            <person name="Itaya M."/>
            <person name="Jones L.-M."/>
            <person name="Joris B."/>
            <person name="Karamata D."/>
            <person name="Kasahara Y."/>
            <person name="Klaerr-Blanchard M."/>
            <person name="Klein C."/>
            <person name="Kobayashi Y."/>
            <person name="Koetter P."/>
            <person name="Koningstein G."/>
            <person name="Krogh S."/>
            <person name="Kumano M."/>
            <person name="Kurita K."/>
            <person name="Lapidus A."/>
            <person name="Lardinois S."/>
            <person name="Lauber J."/>
            <person name="Lazarevic V."/>
            <person name="Lee S.-M."/>
            <person name="Levine A."/>
            <person name="Liu H."/>
            <person name="Masuda S."/>
            <person name="Mauel C."/>
            <person name="Medigue C."/>
            <person name="Medina N."/>
            <person name="Mellado R.P."/>
            <person name="Mizuno M."/>
            <person name="Moestl D."/>
            <person name="Nakai S."/>
            <person name="Noback M."/>
            <person name="Noone D."/>
            <person name="O'Reilly M."/>
            <person name="Ogawa K."/>
            <person name="Ogiwara A."/>
            <person name="Oudega B."/>
            <person name="Park S.-H."/>
            <person name="Parro V."/>
            <person name="Pohl T.M."/>
            <person name="Portetelle D."/>
            <person name="Porwollik S."/>
            <person name="Prescott A.M."/>
            <person name="Presecan E."/>
            <person name="Pujic P."/>
            <person name="Purnelle B."/>
            <person name="Rapoport G."/>
            <person name="Rey M."/>
            <person name="Reynolds S."/>
            <person name="Rieger M."/>
            <person name="Rivolta C."/>
            <person name="Rocha E."/>
            <person name="Roche B."/>
            <person name="Rose M."/>
            <person name="Sadaie Y."/>
            <person name="Sato T."/>
            <person name="Scanlan E."/>
            <person name="Schleich S."/>
            <person name="Schroeter R."/>
            <person name="Scoffone F."/>
            <person name="Sekiguchi J."/>
            <person name="Sekowska A."/>
            <person name="Seror S.J."/>
            <person name="Serror P."/>
            <person name="Shin B.-S."/>
            <person name="Soldo B."/>
            <person name="Sorokin A."/>
            <person name="Tacconi E."/>
            <person name="Takagi T."/>
            <person name="Takahashi H."/>
            <person name="Takemaru K."/>
            <person name="Takeuchi M."/>
            <person name="Tamakoshi A."/>
            <person name="Tanaka T."/>
            <person name="Terpstra P."/>
            <person name="Tognoni A."/>
            <person name="Tosato V."/>
            <person name="Uchiyama S."/>
            <person name="Vandenbol M."/>
            <person name="Vannier F."/>
            <person name="Vassarotti A."/>
            <person name="Viari A."/>
            <person name="Wambutt R."/>
            <person name="Wedler E."/>
            <person name="Wedler H."/>
            <person name="Weitzenegger T."/>
            <person name="Winters P."/>
            <person name="Wipat A."/>
            <person name="Yamamoto H."/>
            <person name="Yamane K."/>
            <person name="Yasumoto K."/>
            <person name="Yata K."/>
            <person name="Yoshida K."/>
            <person name="Yoshikawa H.-F."/>
            <person name="Zumstein E."/>
            <person name="Yoshikawa H."/>
            <person name="Danchin A."/>
        </authorList>
    </citation>
    <scope>NUCLEOTIDE SEQUENCE [LARGE SCALE GENOMIC DNA]</scope>
    <source>
        <strain>168</strain>
    </source>
</reference>
<reference key="3">
    <citation type="journal article" date="1997" name="Electrophoresis">
        <title>First steps from a two-dimensional protein index towards a response-regulation map for Bacillus subtilis.</title>
        <authorList>
            <person name="Antelmann H."/>
            <person name="Bernhardt J."/>
            <person name="Schmid R."/>
            <person name="Mach H."/>
            <person name="Voelker U."/>
            <person name="Hecker M."/>
        </authorList>
    </citation>
    <scope>PROTEIN SEQUENCE OF 2-16</scope>
    <source>
        <strain>168 / IS58</strain>
    </source>
</reference>
<reference key="4">
    <citation type="journal article" date="2009" name="J. Bacteriol.">
        <title>Bacillus subtilis SpoIIIJ and YqjG function in membrane protein biogenesis.</title>
        <authorList>
            <person name="Saller M.J."/>
            <person name="Fusetti F."/>
            <person name="Driessen A.J."/>
        </authorList>
    </citation>
    <scope>IDENTIFICATION BY MASS SPECTROMETRY</scope>
    <scope>INTERACTION WITH SPOIIIJ AND YQJG</scope>
    <source>
        <strain>168</strain>
    </source>
</reference>
<reference key="5">
    <citation type="journal article" date="2010" name="Genes Dev.">
        <title>Functional microdomains in bacterial membranes.</title>
        <authorList>
            <person name="Lopez D."/>
            <person name="Kolter R."/>
        </authorList>
    </citation>
    <scope>SUBCELLULAR LOCATION</scope>
    <source>
        <strain>168 / Marburg / ATCC 6051 / DSM 10 / JCM 1465 / NBRC 13719 / NCIMB 3610 / NRRL NRS-744 / VKM B-501</strain>
    </source>
</reference>
<evidence type="ECO:0000255" key="1">
    <source>
        <dbReference type="HAMAP-Rule" id="MF_01346"/>
    </source>
</evidence>
<evidence type="ECO:0000269" key="2">
    <source>
    </source>
</evidence>
<evidence type="ECO:0000269" key="3">
    <source>
    </source>
</evidence>
<evidence type="ECO:0000269" key="4">
    <source>
    </source>
</evidence>
<evidence type="ECO:0000305" key="5"/>
<feature type="initiator methionine" description="Removed" evidence="4">
    <location>
        <position position="1"/>
    </location>
</feature>
<feature type="chain" id="PRO_0000144319" description="ATP synthase subunit alpha">
    <location>
        <begin position="2"/>
        <end position="502"/>
    </location>
</feature>
<feature type="binding site" evidence="1">
    <location>
        <begin position="169"/>
        <end position="176"/>
    </location>
    <ligand>
        <name>ATP</name>
        <dbReference type="ChEBI" id="CHEBI:30616"/>
    </ligand>
</feature>
<feature type="site" description="Required for activity" evidence="1">
    <location>
        <position position="362"/>
    </location>
</feature>
<protein>
    <recommendedName>
        <fullName evidence="1">ATP synthase subunit alpha</fullName>
        <ecNumber evidence="1">7.1.2.2</ecNumber>
    </recommendedName>
    <alternativeName>
        <fullName evidence="1">ATP synthase F1 sector subunit alpha</fullName>
    </alternativeName>
    <alternativeName>
        <fullName evidence="1">F-ATPase subunit alpha</fullName>
    </alternativeName>
    <alternativeName>
        <fullName>Vegetative protein 100</fullName>
        <shortName>VEG100</shortName>
    </alternativeName>
</protein>
<sequence length="502" mass="54598">MSIKAEEISTLIKQQIQNYQSDIEVQDVGTVIQVGDGIARVHGLDNCMAGELVEFSNGVLGMAQNLEESNVGIVILGPFSEIREGDEVKRTGRIMEVPVGEELIGRIVNPLGQPVDGLGPILTSKTRPIESPAPGVMDRKSVHEPLQTGIKAIDALIPIGRGQRELIIGDRQTGKTSVAIDAILNQKDQDMICVYVAIGQKESTVRGVVETLRKHGALDYTIVVTASASQPAPLLYLAPYAGVTMAEEFMYNGKHVLVVYDDLSKQAAAYRELSLLLRRPPGREAFPGDVFYLHSRLLERAAKLSDAKGAGSITALPFVETQAGDISAYIPTNVISITDGQIFLQSDLFFSGVRPAINAGLSVSRVGGSAQIKAMKKVSGTLRLDLASYRELEAFAQFGSDLDQATQAKLNRGARTVEVLKQDLNKPLPVEKQVAILYALTKGYLDDIPVADIRRFEEEYYMYLDQNHKDLLDGIAKTGNLPADEDFKAAIEGFKRTFAPSN</sequence>
<gene>
    <name evidence="1" type="primary">atpA</name>
    <name type="ordered locus">BSU36830</name>
</gene>
<proteinExistence type="evidence at protein level"/>